<feature type="chain" id="PRO_1000141251" description="Small ribosomal subunit protein uS13">
    <location>
        <begin position="1"/>
        <end position="127"/>
    </location>
</feature>
<feature type="region of interest" description="Disordered" evidence="2">
    <location>
        <begin position="92"/>
        <end position="127"/>
    </location>
</feature>
<feature type="compositionally biased region" description="Basic residues" evidence="2">
    <location>
        <begin position="101"/>
        <end position="127"/>
    </location>
</feature>
<protein>
    <recommendedName>
        <fullName evidence="1">Small ribosomal subunit protein uS13</fullName>
    </recommendedName>
    <alternativeName>
        <fullName evidence="3">30S ribosomal protein S13</fullName>
    </alternativeName>
</protein>
<gene>
    <name evidence="1" type="primary">rpsM</name>
    <name evidence="1" type="synonym">rps13</name>
    <name type="ordered locus">PCC7424_3725</name>
</gene>
<reference key="1">
    <citation type="journal article" date="2011" name="MBio">
        <title>Novel metabolic attributes of the genus Cyanothece, comprising a group of unicellular nitrogen-fixing Cyanobacteria.</title>
        <authorList>
            <person name="Bandyopadhyay A."/>
            <person name="Elvitigala T."/>
            <person name="Welsh E."/>
            <person name="Stockel J."/>
            <person name="Liberton M."/>
            <person name="Min H."/>
            <person name="Sherman L.A."/>
            <person name="Pakrasi H.B."/>
        </authorList>
    </citation>
    <scope>NUCLEOTIDE SEQUENCE [LARGE SCALE GENOMIC DNA]</scope>
    <source>
        <strain>PCC 7424</strain>
    </source>
</reference>
<name>RS13_GLOC7</name>
<accession>B7KI09</accession>
<keyword id="KW-1185">Reference proteome</keyword>
<keyword id="KW-0687">Ribonucleoprotein</keyword>
<keyword id="KW-0689">Ribosomal protein</keyword>
<keyword id="KW-0694">RNA-binding</keyword>
<keyword id="KW-0699">rRNA-binding</keyword>
<keyword id="KW-0820">tRNA-binding</keyword>
<evidence type="ECO:0000255" key="1">
    <source>
        <dbReference type="HAMAP-Rule" id="MF_01315"/>
    </source>
</evidence>
<evidence type="ECO:0000256" key="2">
    <source>
        <dbReference type="SAM" id="MobiDB-lite"/>
    </source>
</evidence>
<evidence type="ECO:0000305" key="3"/>
<proteinExistence type="inferred from homology"/>
<dbReference type="EMBL" id="CP001291">
    <property type="protein sequence ID" value="ACK72106.1"/>
    <property type="molecule type" value="Genomic_DNA"/>
</dbReference>
<dbReference type="RefSeq" id="WP_015955698.1">
    <property type="nucleotide sequence ID" value="NC_011729.1"/>
</dbReference>
<dbReference type="SMR" id="B7KI09"/>
<dbReference type="STRING" id="65393.PCC7424_3725"/>
<dbReference type="KEGG" id="cyc:PCC7424_3725"/>
<dbReference type="eggNOG" id="COG0099">
    <property type="taxonomic scope" value="Bacteria"/>
</dbReference>
<dbReference type="HOGENOM" id="CLU_103849_1_2_3"/>
<dbReference type="OrthoDB" id="9803610at2"/>
<dbReference type="Proteomes" id="UP000002384">
    <property type="component" value="Chromosome"/>
</dbReference>
<dbReference type="GO" id="GO:0005829">
    <property type="term" value="C:cytosol"/>
    <property type="evidence" value="ECO:0007669"/>
    <property type="project" value="TreeGrafter"/>
</dbReference>
<dbReference type="GO" id="GO:0015935">
    <property type="term" value="C:small ribosomal subunit"/>
    <property type="evidence" value="ECO:0007669"/>
    <property type="project" value="TreeGrafter"/>
</dbReference>
<dbReference type="GO" id="GO:0019843">
    <property type="term" value="F:rRNA binding"/>
    <property type="evidence" value="ECO:0007669"/>
    <property type="project" value="UniProtKB-UniRule"/>
</dbReference>
<dbReference type="GO" id="GO:0003735">
    <property type="term" value="F:structural constituent of ribosome"/>
    <property type="evidence" value="ECO:0007669"/>
    <property type="project" value="InterPro"/>
</dbReference>
<dbReference type="GO" id="GO:0000049">
    <property type="term" value="F:tRNA binding"/>
    <property type="evidence" value="ECO:0007669"/>
    <property type="project" value="UniProtKB-UniRule"/>
</dbReference>
<dbReference type="GO" id="GO:0006412">
    <property type="term" value="P:translation"/>
    <property type="evidence" value="ECO:0007669"/>
    <property type="project" value="UniProtKB-UniRule"/>
</dbReference>
<dbReference type="FunFam" id="1.10.8.50:FF:000001">
    <property type="entry name" value="30S ribosomal protein S13"/>
    <property type="match status" value="1"/>
</dbReference>
<dbReference type="FunFam" id="4.10.910.10:FF:000001">
    <property type="entry name" value="30S ribosomal protein S13"/>
    <property type="match status" value="1"/>
</dbReference>
<dbReference type="Gene3D" id="1.10.8.50">
    <property type="match status" value="1"/>
</dbReference>
<dbReference type="Gene3D" id="4.10.910.10">
    <property type="entry name" value="30s ribosomal protein s13, domain 2"/>
    <property type="match status" value="1"/>
</dbReference>
<dbReference type="HAMAP" id="MF_01315">
    <property type="entry name" value="Ribosomal_uS13"/>
    <property type="match status" value="1"/>
</dbReference>
<dbReference type="InterPro" id="IPR027437">
    <property type="entry name" value="Rbsml_uS13_C"/>
</dbReference>
<dbReference type="InterPro" id="IPR001892">
    <property type="entry name" value="Ribosomal_uS13"/>
</dbReference>
<dbReference type="InterPro" id="IPR010979">
    <property type="entry name" value="Ribosomal_uS13-like_H2TH"/>
</dbReference>
<dbReference type="InterPro" id="IPR019980">
    <property type="entry name" value="Ribosomal_uS13_bac-type"/>
</dbReference>
<dbReference type="InterPro" id="IPR018269">
    <property type="entry name" value="Ribosomal_uS13_CS"/>
</dbReference>
<dbReference type="NCBIfam" id="TIGR03631">
    <property type="entry name" value="uS13_bact"/>
    <property type="match status" value="1"/>
</dbReference>
<dbReference type="PANTHER" id="PTHR10871">
    <property type="entry name" value="30S RIBOSOMAL PROTEIN S13/40S RIBOSOMAL PROTEIN S18"/>
    <property type="match status" value="1"/>
</dbReference>
<dbReference type="PANTHER" id="PTHR10871:SF1">
    <property type="entry name" value="SMALL RIBOSOMAL SUBUNIT PROTEIN US13M"/>
    <property type="match status" value="1"/>
</dbReference>
<dbReference type="Pfam" id="PF00416">
    <property type="entry name" value="Ribosomal_S13"/>
    <property type="match status" value="1"/>
</dbReference>
<dbReference type="PIRSF" id="PIRSF002134">
    <property type="entry name" value="Ribosomal_S13"/>
    <property type="match status" value="1"/>
</dbReference>
<dbReference type="SUPFAM" id="SSF46946">
    <property type="entry name" value="S13-like H2TH domain"/>
    <property type="match status" value="1"/>
</dbReference>
<dbReference type="PROSITE" id="PS00646">
    <property type="entry name" value="RIBOSOMAL_S13_1"/>
    <property type="match status" value="1"/>
</dbReference>
<dbReference type="PROSITE" id="PS50159">
    <property type="entry name" value="RIBOSOMAL_S13_2"/>
    <property type="match status" value="1"/>
</dbReference>
<organism>
    <name type="scientific">Gloeothece citriformis (strain PCC 7424)</name>
    <name type="common">Cyanothece sp. (strain PCC 7424)</name>
    <dbReference type="NCBI Taxonomy" id="65393"/>
    <lineage>
        <taxon>Bacteria</taxon>
        <taxon>Bacillati</taxon>
        <taxon>Cyanobacteriota</taxon>
        <taxon>Cyanophyceae</taxon>
        <taxon>Oscillatoriophycideae</taxon>
        <taxon>Chroococcales</taxon>
        <taxon>Aphanothecaceae</taxon>
        <taxon>Gloeothece</taxon>
        <taxon>Gloeothece citriformis</taxon>
    </lineage>
</organism>
<comment type="function">
    <text evidence="1">Located at the top of the head of the 30S subunit, it contacts several helices of the 16S rRNA. In the 70S ribosome it contacts the 23S rRNA (bridge B1a) and protein L5 of the 50S subunit (bridge B1b), connecting the 2 subunits; these bridges are implicated in subunit movement. Contacts the tRNAs in the A and P-sites.</text>
</comment>
<comment type="subunit">
    <text evidence="1">Part of the 30S ribosomal subunit. Forms a loose heterodimer with protein S19. Forms two bridges to the 50S subunit in the 70S ribosome.</text>
</comment>
<comment type="similarity">
    <text evidence="1">Belongs to the universal ribosomal protein uS13 family.</text>
</comment>
<sequence>MARIAGVDLPRDKRVEIALTYLYGIGLSRSKEILANTGVNPDTRVKDLSDEDALALRSYIEANYQIEGDLRRWETMNIKRLVDIGTYRGRRHRQGLPVRGQRTRTNARTRRGRRLTVAGKKKAPSKK</sequence>